<keyword id="KW-0067">ATP-binding</keyword>
<keyword id="KW-0315">Glutamine amidotransferase</keyword>
<keyword id="KW-0332">GMP biosynthesis</keyword>
<keyword id="KW-0436">Ligase</keyword>
<keyword id="KW-0547">Nucleotide-binding</keyword>
<keyword id="KW-0658">Purine biosynthesis</keyword>
<accession>B5BAZ5</accession>
<evidence type="ECO:0000255" key="1">
    <source>
        <dbReference type="HAMAP-Rule" id="MF_00344"/>
    </source>
</evidence>
<name>GUAA_SALPK</name>
<feature type="chain" id="PRO_1000120394" description="GMP synthase [glutamine-hydrolyzing]">
    <location>
        <begin position="1"/>
        <end position="525"/>
    </location>
</feature>
<feature type="domain" description="Glutamine amidotransferase type-1" evidence="1">
    <location>
        <begin position="9"/>
        <end position="207"/>
    </location>
</feature>
<feature type="domain" description="GMPS ATP-PPase" evidence="1">
    <location>
        <begin position="208"/>
        <end position="400"/>
    </location>
</feature>
<feature type="active site" description="Nucleophile" evidence="1">
    <location>
        <position position="86"/>
    </location>
</feature>
<feature type="active site" evidence="1">
    <location>
        <position position="181"/>
    </location>
</feature>
<feature type="active site" evidence="1">
    <location>
        <position position="183"/>
    </location>
</feature>
<feature type="binding site" evidence="1">
    <location>
        <begin position="235"/>
        <end position="241"/>
    </location>
    <ligand>
        <name>ATP</name>
        <dbReference type="ChEBI" id="CHEBI:30616"/>
    </ligand>
</feature>
<gene>
    <name evidence="1" type="primary">guaA</name>
    <name type="ordered locus">SSPA0334</name>
</gene>
<protein>
    <recommendedName>
        <fullName evidence="1">GMP synthase [glutamine-hydrolyzing]</fullName>
        <ecNumber evidence="1">6.3.5.2</ecNumber>
    </recommendedName>
    <alternativeName>
        <fullName evidence="1">GMP synthetase</fullName>
    </alternativeName>
    <alternativeName>
        <fullName evidence="1">Glutamine amidotransferase</fullName>
    </alternativeName>
</protein>
<dbReference type="EC" id="6.3.5.2" evidence="1"/>
<dbReference type="EMBL" id="FM200053">
    <property type="protein sequence ID" value="CAR58455.1"/>
    <property type="molecule type" value="Genomic_DNA"/>
</dbReference>
<dbReference type="RefSeq" id="WP_000138296.1">
    <property type="nucleotide sequence ID" value="NC_011147.1"/>
</dbReference>
<dbReference type="SMR" id="B5BAZ5"/>
<dbReference type="KEGG" id="sek:SSPA0334"/>
<dbReference type="HOGENOM" id="CLU_014340_0_5_6"/>
<dbReference type="UniPathway" id="UPA00189">
    <property type="reaction ID" value="UER00296"/>
</dbReference>
<dbReference type="Proteomes" id="UP000001869">
    <property type="component" value="Chromosome"/>
</dbReference>
<dbReference type="GO" id="GO:0005829">
    <property type="term" value="C:cytosol"/>
    <property type="evidence" value="ECO:0007669"/>
    <property type="project" value="TreeGrafter"/>
</dbReference>
<dbReference type="GO" id="GO:0005524">
    <property type="term" value="F:ATP binding"/>
    <property type="evidence" value="ECO:0007669"/>
    <property type="project" value="UniProtKB-UniRule"/>
</dbReference>
<dbReference type="GO" id="GO:0003921">
    <property type="term" value="F:GMP synthase activity"/>
    <property type="evidence" value="ECO:0007669"/>
    <property type="project" value="InterPro"/>
</dbReference>
<dbReference type="CDD" id="cd01742">
    <property type="entry name" value="GATase1_GMP_Synthase"/>
    <property type="match status" value="1"/>
</dbReference>
<dbReference type="CDD" id="cd01997">
    <property type="entry name" value="GMP_synthase_C"/>
    <property type="match status" value="1"/>
</dbReference>
<dbReference type="FunFam" id="3.30.300.10:FF:000002">
    <property type="entry name" value="GMP synthase [glutamine-hydrolyzing]"/>
    <property type="match status" value="1"/>
</dbReference>
<dbReference type="FunFam" id="3.40.50.620:FF:000001">
    <property type="entry name" value="GMP synthase [glutamine-hydrolyzing]"/>
    <property type="match status" value="1"/>
</dbReference>
<dbReference type="FunFam" id="3.40.50.880:FF:000001">
    <property type="entry name" value="GMP synthase [glutamine-hydrolyzing]"/>
    <property type="match status" value="1"/>
</dbReference>
<dbReference type="Gene3D" id="3.30.300.10">
    <property type="match status" value="1"/>
</dbReference>
<dbReference type="Gene3D" id="3.40.50.880">
    <property type="match status" value="1"/>
</dbReference>
<dbReference type="Gene3D" id="3.40.50.620">
    <property type="entry name" value="HUPs"/>
    <property type="match status" value="1"/>
</dbReference>
<dbReference type="HAMAP" id="MF_00344">
    <property type="entry name" value="GMP_synthase"/>
    <property type="match status" value="1"/>
</dbReference>
<dbReference type="InterPro" id="IPR029062">
    <property type="entry name" value="Class_I_gatase-like"/>
</dbReference>
<dbReference type="InterPro" id="IPR017926">
    <property type="entry name" value="GATASE"/>
</dbReference>
<dbReference type="InterPro" id="IPR001674">
    <property type="entry name" value="GMP_synth_C"/>
</dbReference>
<dbReference type="InterPro" id="IPR004739">
    <property type="entry name" value="GMP_synth_GATase"/>
</dbReference>
<dbReference type="InterPro" id="IPR022955">
    <property type="entry name" value="GMP_synthase"/>
</dbReference>
<dbReference type="InterPro" id="IPR025777">
    <property type="entry name" value="GMPS_ATP_PPase_dom"/>
</dbReference>
<dbReference type="InterPro" id="IPR022310">
    <property type="entry name" value="NAD/GMP_synthase"/>
</dbReference>
<dbReference type="InterPro" id="IPR014729">
    <property type="entry name" value="Rossmann-like_a/b/a_fold"/>
</dbReference>
<dbReference type="NCBIfam" id="TIGR00884">
    <property type="entry name" value="guaA_Cterm"/>
    <property type="match status" value="1"/>
</dbReference>
<dbReference type="NCBIfam" id="TIGR00888">
    <property type="entry name" value="guaA_Nterm"/>
    <property type="match status" value="1"/>
</dbReference>
<dbReference type="NCBIfam" id="NF000848">
    <property type="entry name" value="PRK00074.1"/>
    <property type="match status" value="1"/>
</dbReference>
<dbReference type="PANTHER" id="PTHR11922:SF2">
    <property type="entry name" value="GMP SYNTHASE [GLUTAMINE-HYDROLYZING]"/>
    <property type="match status" value="1"/>
</dbReference>
<dbReference type="PANTHER" id="PTHR11922">
    <property type="entry name" value="GMP SYNTHASE-RELATED"/>
    <property type="match status" value="1"/>
</dbReference>
<dbReference type="Pfam" id="PF00117">
    <property type="entry name" value="GATase"/>
    <property type="match status" value="1"/>
</dbReference>
<dbReference type="Pfam" id="PF00958">
    <property type="entry name" value="GMP_synt_C"/>
    <property type="match status" value="1"/>
</dbReference>
<dbReference type="Pfam" id="PF02540">
    <property type="entry name" value="NAD_synthase"/>
    <property type="match status" value="1"/>
</dbReference>
<dbReference type="PRINTS" id="PR00097">
    <property type="entry name" value="ANTSNTHASEII"/>
</dbReference>
<dbReference type="PRINTS" id="PR00099">
    <property type="entry name" value="CPSGATASE"/>
</dbReference>
<dbReference type="PRINTS" id="PR00096">
    <property type="entry name" value="GATASE"/>
</dbReference>
<dbReference type="SUPFAM" id="SSF52402">
    <property type="entry name" value="Adenine nucleotide alpha hydrolases-like"/>
    <property type="match status" value="1"/>
</dbReference>
<dbReference type="SUPFAM" id="SSF52317">
    <property type="entry name" value="Class I glutamine amidotransferase-like"/>
    <property type="match status" value="1"/>
</dbReference>
<dbReference type="SUPFAM" id="SSF54810">
    <property type="entry name" value="GMP synthetase C-terminal dimerisation domain"/>
    <property type="match status" value="1"/>
</dbReference>
<dbReference type="PROSITE" id="PS51273">
    <property type="entry name" value="GATASE_TYPE_1"/>
    <property type="match status" value="1"/>
</dbReference>
<dbReference type="PROSITE" id="PS51553">
    <property type="entry name" value="GMPS_ATP_PPASE"/>
    <property type="match status" value="1"/>
</dbReference>
<organism>
    <name type="scientific">Salmonella paratyphi A (strain AKU_12601)</name>
    <dbReference type="NCBI Taxonomy" id="554290"/>
    <lineage>
        <taxon>Bacteria</taxon>
        <taxon>Pseudomonadati</taxon>
        <taxon>Pseudomonadota</taxon>
        <taxon>Gammaproteobacteria</taxon>
        <taxon>Enterobacterales</taxon>
        <taxon>Enterobacteriaceae</taxon>
        <taxon>Salmonella</taxon>
    </lineage>
</organism>
<reference key="1">
    <citation type="journal article" date="2009" name="BMC Genomics">
        <title>Pseudogene accumulation in the evolutionary histories of Salmonella enterica serovars Paratyphi A and Typhi.</title>
        <authorList>
            <person name="Holt K.E."/>
            <person name="Thomson N.R."/>
            <person name="Wain J."/>
            <person name="Langridge G.C."/>
            <person name="Hasan R."/>
            <person name="Bhutta Z.A."/>
            <person name="Quail M.A."/>
            <person name="Norbertczak H."/>
            <person name="Walker D."/>
            <person name="Simmonds M."/>
            <person name="White B."/>
            <person name="Bason N."/>
            <person name="Mungall K."/>
            <person name="Dougan G."/>
            <person name="Parkhill J."/>
        </authorList>
    </citation>
    <scope>NUCLEOTIDE SEQUENCE [LARGE SCALE GENOMIC DNA]</scope>
    <source>
        <strain>AKU_12601</strain>
    </source>
</reference>
<comment type="function">
    <text evidence="1">Catalyzes the synthesis of GMP from XMP.</text>
</comment>
<comment type="catalytic activity">
    <reaction evidence="1">
        <text>XMP + L-glutamine + ATP + H2O = GMP + L-glutamate + AMP + diphosphate + 2 H(+)</text>
        <dbReference type="Rhea" id="RHEA:11680"/>
        <dbReference type="ChEBI" id="CHEBI:15377"/>
        <dbReference type="ChEBI" id="CHEBI:15378"/>
        <dbReference type="ChEBI" id="CHEBI:29985"/>
        <dbReference type="ChEBI" id="CHEBI:30616"/>
        <dbReference type="ChEBI" id="CHEBI:33019"/>
        <dbReference type="ChEBI" id="CHEBI:57464"/>
        <dbReference type="ChEBI" id="CHEBI:58115"/>
        <dbReference type="ChEBI" id="CHEBI:58359"/>
        <dbReference type="ChEBI" id="CHEBI:456215"/>
        <dbReference type="EC" id="6.3.5.2"/>
    </reaction>
</comment>
<comment type="pathway">
    <text evidence="1">Purine metabolism; GMP biosynthesis; GMP from XMP (L-Gln route): step 1/1.</text>
</comment>
<comment type="subunit">
    <text evidence="1">Homodimer.</text>
</comment>
<proteinExistence type="inferred from homology"/>
<sequence length="525" mass="58700">MTENIHKHRILILDFGSQYTQLVARRVRELGVYCELWAWDVTEAQIRDFNPSGIILSGGPESTTEENSPRAPQYVFEAGVPVFGVCYGMQTMAMQLGGHVEGSNEREFGYAQVEVLTDSALVRGIEDSLTADGKPLLDVWMSHGDKVTAIPSDFVTVASTESCPFAIMANEEKRFYGVQFHPEVTHTRQGMRMLERFVRDICQCEALWTPAKIIDDAVARIREQVGDDKVILGLSGGVDSSVTAMLLHRAIGKNLTCVFVDNGLLRLNEAEQVMDMFGDHFGLNIVHVPAEERFLSALAGENDPEAKRKIIGRVFVEVFDEEALKLEDVKWLAQGTIYPDVIESAASATGKAHVIKSHHNVGGLPKEMKMGLVEPLKELFKDEVRKIGLELGLPYDMLYRHPFPGPGLGVRVLGEVKKEYCDLLRRADAIFIEELRKADLYDKVSQAFTVFLPVRSVGVMGDGRKYDWVVSLRAVETIDFMTAHWAHLPYDFLGRVSNRIINEVNGISRVVYDISGKPPATIEWE</sequence>